<name>RL35_SHEPC</name>
<sequence>MPKMKTDRGVAKRFKKTANGFKRKQAHLRHILTKKSTKRKRHLRAKCLVSKADVPAIARQLPYA</sequence>
<accession>A4Y704</accession>
<keyword id="KW-0687">Ribonucleoprotein</keyword>
<keyword id="KW-0689">Ribosomal protein</keyword>
<comment type="similarity">
    <text evidence="1">Belongs to the bacterial ribosomal protein bL35 family.</text>
</comment>
<evidence type="ECO:0000255" key="1">
    <source>
        <dbReference type="HAMAP-Rule" id="MF_00514"/>
    </source>
</evidence>
<evidence type="ECO:0000305" key="2"/>
<feature type="chain" id="PRO_1000050765" description="Large ribosomal subunit protein bL35">
    <location>
        <begin position="1"/>
        <end position="64"/>
    </location>
</feature>
<proteinExistence type="inferred from homology"/>
<dbReference type="EMBL" id="CP000681">
    <property type="protein sequence ID" value="ABP75737.1"/>
    <property type="molecule type" value="Genomic_DNA"/>
</dbReference>
<dbReference type="SMR" id="A4Y704"/>
<dbReference type="STRING" id="319224.Sputcn32_2016"/>
<dbReference type="KEGG" id="spc:Sputcn32_2016"/>
<dbReference type="eggNOG" id="COG0291">
    <property type="taxonomic scope" value="Bacteria"/>
</dbReference>
<dbReference type="HOGENOM" id="CLU_169643_1_1_6"/>
<dbReference type="GO" id="GO:0022625">
    <property type="term" value="C:cytosolic large ribosomal subunit"/>
    <property type="evidence" value="ECO:0007669"/>
    <property type="project" value="TreeGrafter"/>
</dbReference>
<dbReference type="GO" id="GO:0003735">
    <property type="term" value="F:structural constituent of ribosome"/>
    <property type="evidence" value="ECO:0007669"/>
    <property type="project" value="InterPro"/>
</dbReference>
<dbReference type="GO" id="GO:0006412">
    <property type="term" value="P:translation"/>
    <property type="evidence" value="ECO:0007669"/>
    <property type="project" value="UniProtKB-UniRule"/>
</dbReference>
<dbReference type="FunFam" id="4.10.410.60:FF:000001">
    <property type="entry name" value="50S ribosomal protein L35"/>
    <property type="match status" value="1"/>
</dbReference>
<dbReference type="Gene3D" id="4.10.410.60">
    <property type="match status" value="1"/>
</dbReference>
<dbReference type="HAMAP" id="MF_00514">
    <property type="entry name" value="Ribosomal_bL35"/>
    <property type="match status" value="1"/>
</dbReference>
<dbReference type="InterPro" id="IPR001706">
    <property type="entry name" value="Ribosomal_bL35"/>
</dbReference>
<dbReference type="InterPro" id="IPR021137">
    <property type="entry name" value="Ribosomal_bL35-like"/>
</dbReference>
<dbReference type="InterPro" id="IPR018265">
    <property type="entry name" value="Ribosomal_bL35_CS"/>
</dbReference>
<dbReference type="InterPro" id="IPR037229">
    <property type="entry name" value="Ribosomal_bL35_sf"/>
</dbReference>
<dbReference type="NCBIfam" id="TIGR00001">
    <property type="entry name" value="rpmI_bact"/>
    <property type="match status" value="1"/>
</dbReference>
<dbReference type="PANTHER" id="PTHR33343">
    <property type="entry name" value="54S RIBOSOMAL PROTEIN BL35M"/>
    <property type="match status" value="1"/>
</dbReference>
<dbReference type="PANTHER" id="PTHR33343:SF1">
    <property type="entry name" value="LARGE RIBOSOMAL SUBUNIT PROTEIN BL35M"/>
    <property type="match status" value="1"/>
</dbReference>
<dbReference type="Pfam" id="PF01632">
    <property type="entry name" value="Ribosomal_L35p"/>
    <property type="match status" value="1"/>
</dbReference>
<dbReference type="PRINTS" id="PR00064">
    <property type="entry name" value="RIBOSOMALL35"/>
</dbReference>
<dbReference type="SUPFAM" id="SSF143034">
    <property type="entry name" value="L35p-like"/>
    <property type="match status" value="1"/>
</dbReference>
<dbReference type="PROSITE" id="PS00936">
    <property type="entry name" value="RIBOSOMAL_L35"/>
    <property type="match status" value="1"/>
</dbReference>
<gene>
    <name evidence="1" type="primary">rpmI</name>
    <name type="ordered locus">Sputcn32_2016</name>
</gene>
<reference key="1">
    <citation type="submission" date="2007-04" db="EMBL/GenBank/DDBJ databases">
        <title>Complete sequence of Shewanella putrefaciens CN-32.</title>
        <authorList>
            <consortium name="US DOE Joint Genome Institute"/>
            <person name="Copeland A."/>
            <person name="Lucas S."/>
            <person name="Lapidus A."/>
            <person name="Barry K."/>
            <person name="Detter J.C."/>
            <person name="Glavina del Rio T."/>
            <person name="Hammon N."/>
            <person name="Israni S."/>
            <person name="Dalin E."/>
            <person name="Tice H."/>
            <person name="Pitluck S."/>
            <person name="Chain P."/>
            <person name="Malfatti S."/>
            <person name="Shin M."/>
            <person name="Vergez L."/>
            <person name="Schmutz J."/>
            <person name="Larimer F."/>
            <person name="Land M."/>
            <person name="Hauser L."/>
            <person name="Kyrpides N."/>
            <person name="Mikhailova N."/>
            <person name="Romine M.F."/>
            <person name="Fredrickson J."/>
            <person name="Tiedje J."/>
            <person name="Richardson P."/>
        </authorList>
    </citation>
    <scope>NUCLEOTIDE SEQUENCE [LARGE SCALE GENOMIC DNA]</scope>
    <source>
        <strain>CN-32 / ATCC BAA-453</strain>
    </source>
</reference>
<protein>
    <recommendedName>
        <fullName evidence="1">Large ribosomal subunit protein bL35</fullName>
    </recommendedName>
    <alternativeName>
        <fullName evidence="2">50S ribosomal protein L35</fullName>
    </alternativeName>
</protein>
<organism>
    <name type="scientific">Shewanella putrefaciens (strain CN-32 / ATCC BAA-453)</name>
    <dbReference type="NCBI Taxonomy" id="319224"/>
    <lineage>
        <taxon>Bacteria</taxon>
        <taxon>Pseudomonadati</taxon>
        <taxon>Pseudomonadota</taxon>
        <taxon>Gammaproteobacteria</taxon>
        <taxon>Alteromonadales</taxon>
        <taxon>Shewanellaceae</taxon>
        <taxon>Shewanella</taxon>
    </lineage>
</organism>